<comment type="function">
    <text evidence="1">Component of the CENPA-CAD (nucleosome distal) complex, a complex recruited to centromeres which is involved in assembly of kinetochore proteins, mitotic progression and chromosome segregation. May be involved in incorporation of newly synthesized CENPA into centromeres via its interaction with the CENPA-NAC complex. Modulates the kinetochore-bound levels of NDC80 complex (By similarity).</text>
</comment>
<comment type="subunit">
    <text evidence="1">Component of the CENPA-CAD complex, composed of CENPI, CENPK, CENPL, CENPO, CENPP, CENPQ, CENPR and CENPS. The CENPA-CAD complex interacts with the CENPA-NAC complex, at least composed of CENPA, CENPC, CENPH, CENPM, CENPN, CENPT and CENPU (By similarity).</text>
</comment>
<comment type="subcellular location">
    <subcellularLocation>
        <location evidence="1">Nucleus</location>
    </subcellularLocation>
    <subcellularLocation>
        <location evidence="1">Chromosome</location>
        <location evidence="1">Centromere</location>
    </subcellularLocation>
    <subcellularLocation>
        <location evidence="1">Chromosome</location>
        <location evidence="1">Centromere</location>
        <location evidence="1">Kinetochore</location>
    </subcellularLocation>
    <text evidence="1">Localizes exclusively in the centromeres. The CENPA-CAD complex is probably recruited on centromeres by the CENPA-NAC complex (By similarity).</text>
</comment>
<comment type="similarity">
    <text evidence="3">Belongs to the CENP-O/MCM21 family.</text>
</comment>
<name>CENPO_BOVIN</name>
<keyword id="KW-0137">Centromere</keyword>
<keyword id="KW-0158">Chromosome</keyword>
<keyword id="KW-0175">Coiled coil</keyword>
<keyword id="KW-0995">Kinetochore</keyword>
<keyword id="KW-0539">Nucleus</keyword>
<keyword id="KW-1185">Reference proteome</keyword>
<proteinExistence type="evidence at transcript level"/>
<sequence>MELANTLRQDGESRGGVLAHLERLETQVSKSRKKLEEPQNAQALEARIHELKRLRDKLRAEVKQRQARVKASTANVEPDQILEISEQEILERKQENMKAILQAYRFTGISGKLTSRGVCVCISTAFEGNLLDSYFVDLVMEKPLWIHHHSVPVFIPLEEISAKYLQTNTRHFLFVLWEYLNAYSGRKYQADRLQSDFAAFLVGPLQRNSLCNLLSFTYKVKPEGQSFPFCARLLYKDLTTTLPTDVTVTSQGTEALPSTWEEQRAAHENLFFTKPLHQVFTSFAKKGEKLDMSLVS</sequence>
<accession>Q3ZBK8</accession>
<gene>
    <name type="primary">CENPO</name>
    <name type="synonym">MCM21R</name>
</gene>
<feature type="chain" id="PRO_0000249501" description="Centromere protein O">
    <location>
        <begin position="1"/>
        <end position="296"/>
    </location>
</feature>
<feature type="coiled-coil region" evidence="2">
    <location>
        <begin position="17"/>
        <end position="105"/>
    </location>
</feature>
<organism>
    <name type="scientific">Bos taurus</name>
    <name type="common">Bovine</name>
    <dbReference type="NCBI Taxonomy" id="9913"/>
    <lineage>
        <taxon>Eukaryota</taxon>
        <taxon>Metazoa</taxon>
        <taxon>Chordata</taxon>
        <taxon>Craniata</taxon>
        <taxon>Vertebrata</taxon>
        <taxon>Euteleostomi</taxon>
        <taxon>Mammalia</taxon>
        <taxon>Eutheria</taxon>
        <taxon>Laurasiatheria</taxon>
        <taxon>Artiodactyla</taxon>
        <taxon>Ruminantia</taxon>
        <taxon>Pecora</taxon>
        <taxon>Bovidae</taxon>
        <taxon>Bovinae</taxon>
        <taxon>Bos</taxon>
    </lineage>
</organism>
<dbReference type="EMBL" id="BC103238">
    <property type="protein sequence ID" value="AAI03239.1"/>
    <property type="molecule type" value="mRNA"/>
</dbReference>
<dbReference type="RefSeq" id="NP_001070471.1">
    <property type="nucleotide sequence ID" value="NM_001077003.1"/>
</dbReference>
<dbReference type="RefSeq" id="XP_010808563.1">
    <property type="nucleotide sequence ID" value="XM_010810261.2"/>
</dbReference>
<dbReference type="RefSeq" id="XP_010808564.1">
    <property type="nucleotide sequence ID" value="XM_010810262.4"/>
</dbReference>
<dbReference type="RefSeq" id="XP_024854998.1">
    <property type="nucleotide sequence ID" value="XM_024999230.2"/>
</dbReference>
<dbReference type="RefSeq" id="XP_059747538.1">
    <property type="nucleotide sequence ID" value="XM_059891555.1"/>
</dbReference>
<dbReference type="RefSeq" id="XP_059747539.1">
    <property type="nucleotide sequence ID" value="XM_059891556.1"/>
</dbReference>
<dbReference type="RefSeq" id="XP_059747540.1">
    <property type="nucleotide sequence ID" value="XM_059891557.1"/>
</dbReference>
<dbReference type="SMR" id="Q3ZBK8"/>
<dbReference type="FunCoup" id="Q3ZBK8">
    <property type="interactions" value="2201"/>
</dbReference>
<dbReference type="STRING" id="9913.ENSBTAP00000032880"/>
<dbReference type="PaxDb" id="9913-ENSBTAP00000032880"/>
<dbReference type="GeneID" id="767930"/>
<dbReference type="KEGG" id="bta:767930"/>
<dbReference type="CTD" id="79172"/>
<dbReference type="VEuPathDB" id="HostDB:ENSBTAG00000015014"/>
<dbReference type="eggNOG" id="ENOG502RY72">
    <property type="taxonomic scope" value="Eukaryota"/>
</dbReference>
<dbReference type="HOGENOM" id="CLU_079531_0_0_1"/>
<dbReference type="InParanoid" id="Q3ZBK8"/>
<dbReference type="OMA" id="MEWANDG"/>
<dbReference type="OrthoDB" id="10050372at2759"/>
<dbReference type="TreeFam" id="TF335524"/>
<dbReference type="Reactome" id="R-BTA-141444">
    <property type="pathway name" value="Amplification of signal from unattached kinetochores via a MAD2 inhibitory signal"/>
</dbReference>
<dbReference type="Reactome" id="R-BTA-2467813">
    <property type="pathway name" value="Separation of Sister Chromatids"/>
</dbReference>
<dbReference type="Reactome" id="R-BTA-2500257">
    <property type="pathway name" value="Resolution of Sister Chromatid Cohesion"/>
</dbReference>
<dbReference type="Reactome" id="R-BTA-5663220">
    <property type="pathway name" value="RHO GTPases Activate Formins"/>
</dbReference>
<dbReference type="Reactome" id="R-BTA-606279">
    <property type="pathway name" value="Deposition of new CENPA-containing nucleosomes at the centromere"/>
</dbReference>
<dbReference type="Reactome" id="R-BTA-68877">
    <property type="pathway name" value="Mitotic Prometaphase"/>
</dbReference>
<dbReference type="Reactome" id="R-BTA-9648025">
    <property type="pathway name" value="EML4 and NUDC in mitotic spindle formation"/>
</dbReference>
<dbReference type="Proteomes" id="UP000009136">
    <property type="component" value="Chromosome 11"/>
</dbReference>
<dbReference type="Bgee" id="ENSBTAG00000015014">
    <property type="expression patterns" value="Expressed in oocyte and 106 other cell types or tissues"/>
</dbReference>
<dbReference type="GO" id="GO:0031511">
    <property type="term" value="C:Mis6-Sim4 complex"/>
    <property type="evidence" value="ECO:0000318"/>
    <property type="project" value="GO_Central"/>
</dbReference>
<dbReference type="GO" id="GO:0005634">
    <property type="term" value="C:nucleus"/>
    <property type="evidence" value="ECO:0007669"/>
    <property type="project" value="UniProtKB-SubCell"/>
</dbReference>
<dbReference type="GO" id="GO:0034508">
    <property type="term" value="P:centromere complex assembly"/>
    <property type="evidence" value="ECO:0007669"/>
    <property type="project" value="InterPro"/>
</dbReference>
<dbReference type="CDD" id="cd23836">
    <property type="entry name" value="DRWD-C_CENP-O"/>
    <property type="match status" value="1"/>
</dbReference>
<dbReference type="CDD" id="cd23835">
    <property type="entry name" value="DRWD-N_CENP-O"/>
    <property type="match status" value="1"/>
</dbReference>
<dbReference type="InterPro" id="IPR018464">
    <property type="entry name" value="CENP-O"/>
</dbReference>
<dbReference type="PANTHER" id="PTHR14582:SF1">
    <property type="entry name" value="CENTROMERE PROTEIN O"/>
    <property type="match status" value="1"/>
</dbReference>
<dbReference type="PANTHER" id="PTHR14582">
    <property type="entry name" value="INNER KINETOCHORE SUBUNIT MAL2"/>
    <property type="match status" value="1"/>
</dbReference>
<dbReference type="Pfam" id="PF09496">
    <property type="entry name" value="CENP-O"/>
    <property type="match status" value="1"/>
</dbReference>
<reference key="1">
    <citation type="submission" date="2005-08" db="EMBL/GenBank/DDBJ databases">
        <authorList>
            <consortium name="NIH - Mammalian Gene Collection (MGC) project"/>
        </authorList>
    </citation>
    <scope>NUCLEOTIDE SEQUENCE [LARGE SCALE MRNA]</scope>
    <source>
        <strain>Hereford</strain>
        <tissue>Thymus</tissue>
    </source>
</reference>
<evidence type="ECO:0000250" key="1"/>
<evidence type="ECO:0000255" key="2"/>
<evidence type="ECO:0000305" key="3"/>
<protein>
    <recommendedName>
        <fullName>Centromere protein O</fullName>
        <shortName>CENP-O</shortName>
    </recommendedName>
</protein>